<comment type="function">
    <text evidence="1">Catalyzes the reversible conversion of 2-phosphoglycerate (2-PG) into phosphoenolpyruvate (PEP). It is essential for the degradation of carbohydrates via glycolysis.</text>
</comment>
<comment type="catalytic activity">
    <reaction evidence="1">
        <text>(2R)-2-phosphoglycerate = phosphoenolpyruvate + H2O</text>
        <dbReference type="Rhea" id="RHEA:10164"/>
        <dbReference type="ChEBI" id="CHEBI:15377"/>
        <dbReference type="ChEBI" id="CHEBI:58289"/>
        <dbReference type="ChEBI" id="CHEBI:58702"/>
        <dbReference type="EC" id="4.2.1.11"/>
    </reaction>
</comment>
<comment type="cofactor">
    <cofactor evidence="1">
        <name>Mg(2+)</name>
        <dbReference type="ChEBI" id="CHEBI:18420"/>
    </cofactor>
    <text evidence="1">Binds a second Mg(2+) ion via substrate during catalysis.</text>
</comment>
<comment type="pathway">
    <text evidence="1">Carbohydrate degradation; glycolysis; pyruvate from D-glyceraldehyde 3-phosphate: step 4/5.</text>
</comment>
<comment type="subcellular location">
    <subcellularLocation>
        <location evidence="1">Cytoplasm</location>
    </subcellularLocation>
    <subcellularLocation>
        <location evidence="1">Secreted</location>
    </subcellularLocation>
    <subcellularLocation>
        <location evidence="1">Cell surface</location>
    </subcellularLocation>
    <text evidence="1">Fractions of enolase are present in both the cytoplasm and on the cell surface.</text>
</comment>
<comment type="similarity">
    <text evidence="1">Belongs to the enolase family.</text>
</comment>
<dbReference type="EC" id="4.2.1.11" evidence="1"/>
<dbReference type="EMBL" id="CR931997">
    <property type="protein sequence ID" value="CAI37656.1"/>
    <property type="molecule type" value="Genomic_DNA"/>
</dbReference>
<dbReference type="RefSeq" id="WP_011273912.1">
    <property type="nucleotide sequence ID" value="NC_007164.1"/>
</dbReference>
<dbReference type="SMR" id="Q4JU51"/>
<dbReference type="STRING" id="306537.jk1483"/>
<dbReference type="KEGG" id="cjk:jk1483"/>
<dbReference type="PATRIC" id="fig|306537.10.peg.1503"/>
<dbReference type="eggNOG" id="COG0148">
    <property type="taxonomic scope" value="Bacteria"/>
</dbReference>
<dbReference type="HOGENOM" id="CLU_031223_2_1_11"/>
<dbReference type="OrthoDB" id="9804716at2"/>
<dbReference type="UniPathway" id="UPA00109">
    <property type="reaction ID" value="UER00187"/>
</dbReference>
<dbReference type="Proteomes" id="UP000000545">
    <property type="component" value="Chromosome"/>
</dbReference>
<dbReference type="GO" id="GO:0009986">
    <property type="term" value="C:cell surface"/>
    <property type="evidence" value="ECO:0007669"/>
    <property type="project" value="UniProtKB-SubCell"/>
</dbReference>
<dbReference type="GO" id="GO:0005576">
    <property type="term" value="C:extracellular region"/>
    <property type="evidence" value="ECO:0007669"/>
    <property type="project" value="UniProtKB-SubCell"/>
</dbReference>
<dbReference type="GO" id="GO:0000015">
    <property type="term" value="C:phosphopyruvate hydratase complex"/>
    <property type="evidence" value="ECO:0007669"/>
    <property type="project" value="InterPro"/>
</dbReference>
<dbReference type="GO" id="GO:0000287">
    <property type="term" value="F:magnesium ion binding"/>
    <property type="evidence" value="ECO:0007669"/>
    <property type="project" value="UniProtKB-UniRule"/>
</dbReference>
<dbReference type="GO" id="GO:0004634">
    <property type="term" value="F:phosphopyruvate hydratase activity"/>
    <property type="evidence" value="ECO:0007669"/>
    <property type="project" value="UniProtKB-UniRule"/>
</dbReference>
<dbReference type="GO" id="GO:0006096">
    <property type="term" value="P:glycolytic process"/>
    <property type="evidence" value="ECO:0007669"/>
    <property type="project" value="UniProtKB-UniRule"/>
</dbReference>
<dbReference type="CDD" id="cd03313">
    <property type="entry name" value="enolase"/>
    <property type="match status" value="1"/>
</dbReference>
<dbReference type="FunFam" id="3.20.20.120:FF:000001">
    <property type="entry name" value="Enolase"/>
    <property type="match status" value="1"/>
</dbReference>
<dbReference type="FunFam" id="3.30.390.10:FF:000001">
    <property type="entry name" value="Enolase"/>
    <property type="match status" value="1"/>
</dbReference>
<dbReference type="Gene3D" id="3.20.20.120">
    <property type="entry name" value="Enolase-like C-terminal domain"/>
    <property type="match status" value="1"/>
</dbReference>
<dbReference type="Gene3D" id="3.30.390.10">
    <property type="entry name" value="Enolase-like, N-terminal domain"/>
    <property type="match status" value="1"/>
</dbReference>
<dbReference type="HAMAP" id="MF_00318">
    <property type="entry name" value="Enolase"/>
    <property type="match status" value="1"/>
</dbReference>
<dbReference type="InterPro" id="IPR000941">
    <property type="entry name" value="Enolase"/>
</dbReference>
<dbReference type="InterPro" id="IPR036849">
    <property type="entry name" value="Enolase-like_C_sf"/>
</dbReference>
<dbReference type="InterPro" id="IPR029017">
    <property type="entry name" value="Enolase-like_N"/>
</dbReference>
<dbReference type="InterPro" id="IPR020810">
    <property type="entry name" value="Enolase_C"/>
</dbReference>
<dbReference type="InterPro" id="IPR020809">
    <property type="entry name" value="Enolase_CS"/>
</dbReference>
<dbReference type="InterPro" id="IPR020811">
    <property type="entry name" value="Enolase_N"/>
</dbReference>
<dbReference type="NCBIfam" id="TIGR01060">
    <property type="entry name" value="eno"/>
    <property type="match status" value="1"/>
</dbReference>
<dbReference type="PANTHER" id="PTHR11902">
    <property type="entry name" value="ENOLASE"/>
    <property type="match status" value="1"/>
</dbReference>
<dbReference type="PANTHER" id="PTHR11902:SF1">
    <property type="entry name" value="ENOLASE"/>
    <property type="match status" value="1"/>
</dbReference>
<dbReference type="Pfam" id="PF00113">
    <property type="entry name" value="Enolase_C"/>
    <property type="match status" value="1"/>
</dbReference>
<dbReference type="Pfam" id="PF03952">
    <property type="entry name" value="Enolase_N"/>
    <property type="match status" value="1"/>
</dbReference>
<dbReference type="PIRSF" id="PIRSF001400">
    <property type="entry name" value="Enolase"/>
    <property type="match status" value="1"/>
</dbReference>
<dbReference type="PRINTS" id="PR00148">
    <property type="entry name" value="ENOLASE"/>
</dbReference>
<dbReference type="SFLD" id="SFLDF00002">
    <property type="entry name" value="enolase"/>
    <property type="match status" value="1"/>
</dbReference>
<dbReference type="SFLD" id="SFLDG00178">
    <property type="entry name" value="enolase"/>
    <property type="match status" value="1"/>
</dbReference>
<dbReference type="SMART" id="SM01192">
    <property type="entry name" value="Enolase_C"/>
    <property type="match status" value="1"/>
</dbReference>
<dbReference type="SMART" id="SM01193">
    <property type="entry name" value="Enolase_N"/>
    <property type="match status" value="1"/>
</dbReference>
<dbReference type="SUPFAM" id="SSF51604">
    <property type="entry name" value="Enolase C-terminal domain-like"/>
    <property type="match status" value="1"/>
</dbReference>
<dbReference type="SUPFAM" id="SSF54826">
    <property type="entry name" value="Enolase N-terminal domain-like"/>
    <property type="match status" value="1"/>
</dbReference>
<dbReference type="PROSITE" id="PS00164">
    <property type="entry name" value="ENOLASE"/>
    <property type="match status" value="1"/>
</dbReference>
<accession>Q4JU51</accession>
<gene>
    <name evidence="1" type="primary">eno</name>
    <name type="ordered locus">jk1483</name>
</gene>
<feature type="chain" id="PRO_0000267022" description="Enolase">
    <location>
        <begin position="1"/>
        <end position="425"/>
    </location>
</feature>
<feature type="active site" description="Proton donor" evidence="1">
    <location>
        <position position="204"/>
    </location>
</feature>
<feature type="active site" description="Proton acceptor" evidence="1">
    <location>
        <position position="334"/>
    </location>
</feature>
<feature type="binding site" evidence="1">
    <location>
        <position position="162"/>
    </location>
    <ligand>
        <name>(2R)-2-phosphoglycerate</name>
        <dbReference type="ChEBI" id="CHEBI:58289"/>
    </ligand>
</feature>
<feature type="binding site" evidence="1">
    <location>
        <position position="241"/>
    </location>
    <ligand>
        <name>Mg(2+)</name>
        <dbReference type="ChEBI" id="CHEBI:18420"/>
    </ligand>
</feature>
<feature type="binding site" evidence="1">
    <location>
        <position position="282"/>
    </location>
    <ligand>
        <name>Mg(2+)</name>
        <dbReference type="ChEBI" id="CHEBI:18420"/>
    </ligand>
</feature>
<feature type="binding site" evidence="1">
    <location>
        <position position="309"/>
    </location>
    <ligand>
        <name>Mg(2+)</name>
        <dbReference type="ChEBI" id="CHEBI:18420"/>
    </ligand>
</feature>
<feature type="binding site" evidence="1">
    <location>
        <position position="334"/>
    </location>
    <ligand>
        <name>(2R)-2-phosphoglycerate</name>
        <dbReference type="ChEBI" id="CHEBI:58289"/>
    </ligand>
</feature>
<feature type="binding site" evidence="1">
    <location>
        <position position="363"/>
    </location>
    <ligand>
        <name>(2R)-2-phosphoglycerate</name>
        <dbReference type="ChEBI" id="CHEBI:58289"/>
    </ligand>
</feature>
<feature type="binding site" evidence="1">
    <location>
        <position position="364"/>
    </location>
    <ligand>
        <name>(2R)-2-phosphoglycerate</name>
        <dbReference type="ChEBI" id="CHEBI:58289"/>
    </ligand>
</feature>
<feature type="binding site" evidence="1">
    <location>
        <position position="385"/>
    </location>
    <ligand>
        <name>(2R)-2-phosphoglycerate</name>
        <dbReference type="ChEBI" id="CHEBI:58289"/>
    </ligand>
</feature>
<protein>
    <recommendedName>
        <fullName evidence="1">Enolase</fullName>
        <ecNumber evidence="1">4.2.1.11</ecNumber>
    </recommendedName>
    <alternativeName>
        <fullName evidence="1">2-phospho-D-glycerate hydro-lyase</fullName>
    </alternativeName>
    <alternativeName>
        <fullName evidence="1">2-phosphoglycerate dehydratase</fullName>
    </alternativeName>
</protein>
<organism>
    <name type="scientific">Corynebacterium jeikeium (strain K411)</name>
    <dbReference type="NCBI Taxonomy" id="306537"/>
    <lineage>
        <taxon>Bacteria</taxon>
        <taxon>Bacillati</taxon>
        <taxon>Actinomycetota</taxon>
        <taxon>Actinomycetes</taxon>
        <taxon>Mycobacteriales</taxon>
        <taxon>Corynebacteriaceae</taxon>
        <taxon>Corynebacterium</taxon>
    </lineage>
</organism>
<keyword id="KW-0963">Cytoplasm</keyword>
<keyword id="KW-0324">Glycolysis</keyword>
<keyword id="KW-0456">Lyase</keyword>
<keyword id="KW-0460">Magnesium</keyword>
<keyword id="KW-0479">Metal-binding</keyword>
<keyword id="KW-1185">Reference proteome</keyword>
<keyword id="KW-0964">Secreted</keyword>
<evidence type="ECO:0000255" key="1">
    <source>
        <dbReference type="HAMAP-Rule" id="MF_00318"/>
    </source>
</evidence>
<proteinExistence type="inferred from homology"/>
<reference key="1">
    <citation type="journal article" date="2005" name="J. Bacteriol.">
        <title>Complete genome sequence and analysis of the multiresistant nosocomial pathogen Corynebacterium jeikeium K411, a lipid-requiring bacterium of the human skin flora.</title>
        <authorList>
            <person name="Tauch A."/>
            <person name="Kaiser O."/>
            <person name="Hain T."/>
            <person name="Goesmann A."/>
            <person name="Weisshaar B."/>
            <person name="Albersmeier A."/>
            <person name="Bekel T."/>
            <person name="Bischoff N."/>
            <person name="Brune I."/>
            <person name="Chakraborty T."/>
            <person name="Kalinowski J."/>
            <person name="Meyer F."/>
            <person name="Rupp O."/>
            <person name="Schneiker S."/>
            <person name="Viehoever P."/>
            <person name="Puehler A."/>
        </authorList>
    </citation>
    <scope>NUCLEOTIDE SEQUENCE [LARGE SCALE GENOMIC DNA]</scope>
    <source>
        <strain>K411</strain>
    </source>
</reference>
<sequence length="425" mass="45649">MALILNIDAREIIDSRGNPTVEVDVLLDDGSFGRAAVPSGASTGVHEAHELRDGGERYQGKGVLNAVKNVIEDIDEELMGVEADDQRLIDQLMRDLDGTENKSKLGANAILGVSMAVARAAAESADLPLFRYVGGPNAHVLPVPMMNILNGGAHADSGVDVQEFMIAPIGAETFSEALRVGAEVYHTLKKVIKDKGLSTGLGDEGGFAPSVDSTKAALDLIVEAIEKAGFKVGEDVALALDVASSEFFKDGKYHFEGGEHTAEEMAKVYEDLIEEYPIVSIEDPLQEDDWEGYTALTAKIGDKVQLVGDDFFVTNPQRLAKGIEEKAANALLVKVNQIGTLTETFDAVELAHRNGYRSMMSHRSGETEDTTIADLAVALNCGQIKTGAPARSERVAKYNQLLRIEEILGDAAVYAGRSAFPRFTK</sequence>
<name>ENO_CORJK</name>